<protein>
    <recommendedName>
        <fullName evidence="1">ATP-dependent 6-phosphofructokinase</fullName>
        <shortName evidence="1">ATP-PFK</shortName>
        <shortName evidence="1">Phosphofructokinase</shortName>
        <ecNumber evidence="1">2.7.1.11</ecNumber>
    </recommendedName>
    <alternativeName>
        <fullName evidence="1">Phosphohexokinase</fullName>
    </alternativeName>
</protein>
<comment type="function">
    <text evidence="1">Catalyzes the phosphorylation of D-fructose 6-phosphate to fructose 1,6-bisphosphate by ATP, the first committing step of glycolysis.</text>
</comment>
<comment type="catalytic activity">
    <reaction evidence="1">
        <text>beta-D-fructose 6-phosphate + ATP = beta-D-fructose 1,6-bisphosphate + ADP + H(+)</text>
        <dbReference type="Rhea" id="RHEA:16109"/>
        <dbReference type="ChEBI" id="CHEBI:15378"/>
        <dbReference type="ChEBI" id="CHEBI:30616"/>
        <dbReference type="ChEBI" id="CHEBI:32966"/>
        <dbReference type="ChEBI" id="CHEBI:57634"/>
        <dbReference type="ChEBI" id="CHEBI:456216"/>
        <dbReference type="EC" id="2.7.1.11"/>
    </reaction>
</comment>
<comment type="cofactor">
    <cofactor evidence="1">
        <name>Mg(2+)</name>
        <dbReference type="ChEBI" id="CHEBI:18420"/>
    </cofactor>
</comment>
<comment type="activity regulation">
    <text evidence="1">Allosterically activated by ADP and other diphosphonucleosides, and allosterically inhibited by phosphoenolpyruvate.</text>
</comment>
<comment type="pathway">
    <text evidence="1">Carbohydrate degradation; glycolysis; D-glyceraldehyde 3-phosphate and glycerone phosphate from D-glucose: step 3/4.</text>
</comment>
<comment type="subunit">
    <text evidence="1">Homotetramer.</text>
</comment>
<comment type="subcellular location">
    <subcellularLocation>
        <location evidence="1">Cytoplasm</location>
    </subcellularLocation>
</comment>
<comment type="similarity">
    <text evidence="1">Belongs to the phosphofructokinase type A (PFKA) family. ATP-dependent PFK group I subfamily. Prokaryotic clade 'B1' sub-subfamily.</text>
</comment>
<feature type="chain" id="PRO_0000111972" description="ATP-dependent 6-phosphofructokinase">
    <location>
        <begin position="1"/>
        <end position="320"/>
    </location>
</feature>
<feature type="active site" description="Proton acceptor" evidence="1">
    <location>
        <position position="128"/>
    </location>
</feature>
<feature type="binding site" evidence="1">
    <location>
        <position position="12"/>
    </location>
    <ligand>
        <name>ATP</name>
        <dbReference type="ChEBI" id="CHEBI:30616"/>
    </ligand>
</feature>
<feature type="binding site" evidence="1">
    <location>
        <begin position="22"/>
        <end position="26"/>
    </location>
    <ligand>
        <name>ADP</name>
        <dbReference type="ChEBI" id="CHEBI:456216"/>
        <note>allosteric activator; ligand shared between dimeric partners</note>
    </ligand>
</feature>
<feature type="binding site" evidence="1">
    <location>
        <begin position="55"/>
        <end position="60"/>
    </location>
    <ligand>
        <name>ADP</name>
        <dbReference type="ChEBI" id="CHEBI:456216"/>
        <note>allosteric activator; ligand shared between dimeric partners</note>
    </ligand>
</feature>
<feature type="binding site" evidence="1">
    <location>
        <begin position="73"/>
        <end position="74"/>
    </location>
    <ligand>
        <name>ATP</name>
        <dbReference type="ChEBI" id="CHEBI:30616"/>
    </ligand>
</feature>
<feature type="binding site" evidence="1">
    <location>
        <begin position="103"/>
        <end position="106"/>
    </location>
    <ligand>
        <name>ATP</name>
        <dbReference type="ChEBI" id="CHEBI:30616"/>
    </ligand>
</feature>
<feature type="binding site" evidence="1">
    <location>
        <position position="104"/>
    </location>
    <ligand>
        <name>Mg(2+)</name>
        <dbReference type="ChEBI" id="CHEBI:18420"/>
        <note>catalytic</note>
    </ligand>
</feature>
<feature type="binding site" description="in other chain" evidence="1">
    <location>
        <begin position="126"/>
        <end position="128"/>
    </location>
    <ligand>
        <name>substrate</name>
        <note>ligand shared between dimeric partners</note>
    </ligand>
</feature>
<feature type="binding site" description="in other chain" evidence="1">
    <location>
        <position position="155"/>
    </location>
    <ligand>
        <name>ADP</name>
        <dbReference type="ChEBI" id="CHEBI:456216"/>
        <note>allosteric activator; ligand shared between dimeric partners</note>
    </ligand>
</feature>
<feature type="binding site" evidence="1">
    <location>
        <position position="163"/>
    </location>
    <ligand>
        <name>substrate</name>
        <note>ligand shared between dimeric partners</note>
    </ligand>
</feature>
<feature type="binding site" description="in other chain" evidence="1">
    <location>
        <begin position="170"/>
        <end position="172"/>
    </location>
    <ligand>
        <name>substrate</name>
        <note>ligand shared between dimeric partners</note>
    </ligand>
</feature>
<feature type="binding site" description="in other chain" evidence="1">
    <location>
        <begin position="186"/>
        <end position="188"/>
    </location>
    <ligand>
        <name>ADP</name>
        <dbReference type="ChEBI" id="CHEBI:456216"/>
        <note>allosteric activator; ligand shared between dimeric partners</note>
    </ligand>
</feature>
<feature type="binding site" description="in other chain" evidence="1">
    <location>
        <position position="212"/>
    </location>
    <ligand>
        <name>ADP</name>
        <dbReference type="ChEBI" id="CHEBI:456216"/>
        <note>allosteric activator; ligand shared between dimeric partners</note>
    </ligand>
</feature>
<feature type="binding site" description="in other chain" evidence="1">
    <location>
        <begin position="214"/>
        <end position="216"/>
    </location>
    <ligand>
        <name>ADP</name>
        <dbReference type="ChEBI" id="CHEBI:456216"/>
        <note>allosteric activator; ligand shared between dimeric partners</note>
    </ligand>
</feature>
<feature type="binding site" description="in other chain" evidence="1">
    <location>
        <position position="223"/>
    </location>
    <ligand>
        <name>substrate</name>
        <note>ligand shared between dimeric partners</note>
    </ligand>
</feature>
<feature type="binding site" evidence="1">
    <location>
        <position position="244"/>
    </location>
    <ligand>
        <name>substrate</name>
        <note>ligand shared between dimeric partners</note>
    </ligand>
</feature>
<feature type="binding site" description="in other chain" evidence="1">
    <location>
        <begin position="250"/>
        <end position="253"/>
    </location>
    <ligand>
        <name>substrate</name>
        <note>ligand shared between dimeric partners</note>
    </ligand>
</feature>
<dbReference type="EC" id="2.7.1.11" evidence="1"/>
<dbReference type="EMBL" id="AL513382">
    <property type="protein sequence ID" value="CAD09562.1"/>
    <property type="molecule type" value="Genomic_DNA"/>
</dbReference>
<dbReference type="EMBL" id="AE014613">
    <property type="protein sequence ID" value="AAO71062.1"/>
    <property type="molecule type" value="Genomic_DNA"/>
</dbReference>
<dbReference type="RefSeq" id="NP_457989.1">
    <property type="nucleotide sequence ID" value="NC_003198.1"/>
</dbReference>
<dbReference type="RefSeq" id="WP_000591793.1">
    <property type="nucleotide sequence ID" value="NZ_WSUR01000010.1"/>
</dbReference>
<dbReference type="SMR" id="P65693"/>
<dbReference type="STRING" id="220341.gene:17587673"/>
<dbReference type="GeneID" id="66758327"/>
<dbReference type="KEGG" id="stt:t3557"/>
<dbReference type="KEGG" id="sty:STY3809"/>
<dbReference type="PATRIC" id="fig|220341.7.peg.3888"/>
<dbReference type="eggNOG" id="COG0205">
    <property type="taxonomic scope" value="Bacteria"/>
</dbReference>
<dbReference type="HOGENOM" id="CLU_020655_0_1_6"/>
<dbReference type="OMA" id="GYQGMIE"/>
<dbReference type="OrthoDB" id="9802503at2"/>
<dbReference type="UniPathway" id="UPA00109">
    <property type="reaction ID" value="UER00182"/>
</dbReference>
<dbReference type="Proteomes" id="UP000000541">
    <property type="component" value="Chromosome"/>
</dbReference>
<dbReference type="Proteomes" id="UP000002670">
    <property type="component" value="Chromosome"/>
</dbReference>
<dbReference type="GO" id="GO:0005945">
    <property type="term" value="C:6-phosphofructokinase complex"/>
    <property type="evidence" value="ECO:0007669"/>
    <property type="project" value="TreeGrafter"/>
</dbReference>
<dbReference type="GO" id="GO:0003872">
    <property type="term" value="F:6-phosphofructokinase activity"/>
    <property type="evidence" value="ECO:0007669"/>
    <property type="project" value="UniProtKB-UniRule"/>
</dbReference>
<dbReference type="GO" id="GO:0016208">
    <property type="term" value="F:AMP binding"/>
    <property type="evidence" value="ECO:0007669"/>
    <property type="project" value="TreeGrafter"/>
</dbReference>
<dbReference type="GO" id="GO:0005524">
    <property type="term" value="F:ATP binding"/>
    <property type="evidence" value="ECO:0007669"/>
    <property type="project" value="UniProtKB-KW"/>
</dbReference>
<dbReference type="GO" id="GO:0070095">
    <property type="term" value="F:fructose-6-phosphate binding"/>
    <property type="evidence" value="ECO:0007669"/>
    <property type="project" value="TreeGrafter"/>
</dbReference>
<dbReference type="GO" id="GO:0042802">
    <property type="term" value="F:identical protein binding"/>
    <property type="evidence" value="ECO:0007669"/>
    <property type="project" value="TreeGrafter"/>
</dbReference>
<dbReference type="GO" id="GO:0046872">
    <property type="term" value="F:metal ion binding"/>
    <property type="evidence" value="ECO:0007669"/>
    <property type="project" value="UniProtKB-KW"/>
</dbReference>
<dbReference type="GO" id="GO:0048029">
    <property type="term" value="F:monosaccharide binding"/>
    <property type="evidence" value="ECO:0007669"/>
    <property type="project" value="TreeGrafter"/>
</dbReference>
<dbReference type="GO" id="GO:0061621">
    <property type="term" value="P:canonical glycolysis"/>
    <property type="evidence" value="ECO:0007669"/>
    <property type="project" value="TreeGrafter"/>
</dbReference>
<dbReference type="GO" id="GO:0030388">
    <property type="term" value="P:fructose 1,6-bisphosphate metabolic process"/>
    <property type="evidence" value="ECO:0007669"/>
    <property type="project" value="TreeGrafter"/>
</dbReference>
<dbReference type="GO" id="GO:0006002">
    <property type="term" value="P:fructose 6-phosphate metabolic process"/>
    <property type="evidence" value="ECO:0007669"/>
    <property type="project" value="InterPro"/>
</dbReference>
<dbReference type="CDD" id="cd00763">
    <property type="entry name" value="Bacterial_PFK"/>
    <property type="match status" value="1"/>
</dbReference>
<dbReference type="FunFam" id="3.40.50.450:FF:000001">
    <property type="entry name" value="ATP-dependent 6-phosphofructokinase"/>
    <property type="match status" value="1"/>
</dbReference>
<dbReference type="FunFam" id="3.40.50.460:FF:000002">
    <property type="entry name" value="ATP-dependent 6-phosphofructokinase"/>
    <property type="match status" value="1"/>
</dbReference>
<dbReference type="Gene3D" id="3.40.50.450">
    <property type="match status" value="1"/>
</dbReference>
<dbReference type="Gene3D" id="3.40.50.460">
    <property type="entry name" value="Phosphofructokinase domain"/>
    <property type="match status" value="1"/>
</dbReference>
<dbReference type="HAMAP" id="MF_00339">
    <property type="entry name" value="Phosphofructokinase_I_B1"/>
    <property type="match status" value="1"/>
</dbReference>
<dbReference type="InterPro" id="IPR022953">
    <property type="entry name" value="ATP_PFK"/>
</dbReference>
<dbReference type="InterPro" id="IPR012003">
    <property type="entry name" value="ATP_PFK_prok-type"/>
</dbReference>
<dbReference type="InterPro" id="IPR012828">
    <property type="entry name" value="PFKA_ATP_prok"/>
</dbReference>
<dbReference type="InterPro" id="IPR015912">
    <property type="entry name" value="Phosphofructokinase_CS"/>
</dbReference>
<dbReference type="InterPro" id="IPR000023">
    <property type="entry name" value="Phosphofructokinase_dom"/>
</dbReference>
<dbReference type="InterPro" id="IPR035966">
    <property type="entry name" value="PKF_sf"/>
</dbReference>
<dbReference type="NCBIfam" id="TIGR02482">
    <property type="entry name" value="PFKA_ATP"/>
    <property type="match status" value="1"/>
</dbReference>
<dbReference type="NCBIfam" id="NF002872">
    <property type="entry name" value="PRK03202.1"/>
    <property type="match status" value="1"/>
</dbReference>
<dbReference type="PANTHER" id="PTHR13697:SF4">
    <property type="entry name" value="ATP-DEPENDENT 6-PHOSPHOFRUCTOKINASE"/>
    <property type="match status" value="1"/>
</dbReference>
<dbReference type="PANTHER" id="PTHR13697">
    <property type="entry name" value="PHOSPHOFRUCTOKINASE"/>
    <property type="match status" value="1"/>
</dbReference>
<dbReference type="Pfam" id="PF00365">
    <property type="entry name" value="PFK"/>
    <property type="match status" value="1"/>
</dbReference>
<dbReference type="PIRSF" id="PIRSF000532">
    <property type="entry name" value="ATP_PFK_prok"/>
    <property type="match status" value="1"/>
</dbReference>
<dbReference type="PRINTS" id="PR00476">
    <property type="entry name" value="PHFRCTKINASE"/>
</dbReference>
<dbReference type="SUPFAM" id="SSF53784">
    <property type="entry name" value="Phosphofructokinase"/>
    <property type="match status" value="1"/>
</dbReference>
<dbReference type="PROSITE" id="PS00433">
    <property type="entry name" value="PHOSPHOFRUCTOKINASE"/>
    <property type="match status" value="1"/>
</dbReference>
<name>PFKA_SALTI</name>
<keyword id="KW-0021">Allosteric enzyme</keyword>
<keyword id="KW-0067">ATP-binding</keyword>
<keyword id="KW-0963">Cytoplasm</keyword>
<keyword id="KW-0324">Glycolysis</keyword>
<keyword id="KW-0418">Kinase</keyword>
<keyword id="KW-0460">Magnesium</keyword>
<keyword id="KW-0479">Metal-binding</keyword>
<keyword id="KW-0547">Nucleotide-binding</keyword>
<keyword id="KW-0808">Transferase</keyword>
<proteinExistence type="inferred from homology"/>
<accession>P65693</accession>
<accession>Q8XG19</accession>
<evidence type="ECO:0000255" key="1">
    <source>
        <dbReference type="HAMAP-Rule" id="MF_00339"/>
    </source>
</evidence>
<gene>
    <name evidence="1" type="primary">pfkA</name>
    <name type="ordered locus">STY3809</name>
    <name type="ordered locus">t3557</name>
</gene>
<reference key="1">
    <citation type="journal article" date="2001" name="Nature">
        <title>Complete genome sequence of a multiple drug resistant Salmonella enterica serovar Typhi CT18.</title>
        <authorList>
            <person name="Parkhill J."/>
            <person name="Dougan G."/>
            <person name="James K.D."/>
            <person name="Thomson N.R."/>
            <person name="Pickard D."/>
            <person name="Wain J."/>
            <person name="Churcher C.M."/>
            <person name="Mungall K.L."/>
            <person name="Bentley S.D."/>
            <person name="Holden M.T.G."/>
            <person name="Sebaihia M."/>
            <person name="Baker S."/>
            <person name="Basham D."/>
            <person name="Brooks K."/>
            <person name="Chillingworth T."/>
            <person name="Connerton P."/>
            <person name="Cronin A."/>
            <person name="Davis P."/>
            <person name="Davies R.M."/>
            <person name="Dowd L."/>
            <person name="White N."/>
            <person name="Farrar J."/>
            <person name="Feltwell T."/>
            <person name="Hamlin N."/>
            <person name="Haque A."/>
            <person name="Hien T.T."/>
            <person name="Holroyd S."/>
            <person name="Jagels K."/>
            <person name="Krogh A."/>
            <person name="Larsen T.S."/>
            <person name="Leather S."/>
            <person name="Moule S."/>
            <person name="O'Gaora P."/>
            <person name="Parry C."/>
            <person name="Quail M.A."/>
            <person name="Rutherford K.M."/>
            <person name="Simmonds M."/>
            <person name="Skelton J."/>
            <person name="Stevens K."/>
            <person name="Whitehead S."/>
            <person name="Barrell B.G."/>
        </authorList>
    </citation>
    <scope>NUCLEOTIDE SEQUENCE [LARGE SCALE GENOMIC DNA]</scope>
    <source>
        <strain>CT18</strain>
    </source>
</reference>
<reference key="2">
    <citation type="journal article" date="2003" name="J. Bacteriol.">
        <title>Comparative genomics of Salmonella enterica serovar Typhi strains Ty2 and CT18.</title>
        <authorList>
            <person name="Deng W."/>
            <person name="Liou S.-R."/>
            <person name="Plunkett G. III"/>
            <person name="Mayhew G.F."/>
            <person name="Rose D.J."/>
            <person name="Burland V."/>
            <person name="Kodoyianni V."/>
            <person name="Schwartz D.C."/>
            <person name="Blattner F.R."/>
        </authorList>
    </citation>
    <scope>NUCLEOTIDE SEQUENCE [LARGE SCALE GENOMIC DNA]</scope>
    <source>
        <strain>ATCC 700931 / Ty2</strain>
    </source>
</reference>
<organism>
    <name type="scientific">Salmonella typhi</name>
    <dbReference type="NCBI Taxonomy" id="90370"/>
    <lineage>
        <taxon>Bacteria</taxon>
        <taxon>Pseudomonadati</taxon>
        <taxon>Pseudomonadota</taxon>
        <taxon>Gammaproteobacteria</taxon>
        <taxon>Enterobacterales</taxon>
        <taxon>Enterobacteriaceae</taxon>
        <taxon>Salmonella</taxon>
    </lineage>
</organism>
<sequence length="320" mass="34915">MIKKIGVLTSGGDAPGMNAAIRGVVRAALTEGLEVMGIYDGYLGLYEDRMVQLDRYSVSDMINRGGTFLGSARFPEFRDENIRAVAIENLKKRGIDALVVIGGDGSYMGAKRLTEMGFPCIGLPGTIDNDIKGTDYTIGYFTALGTVVEAIDRLRDTSSSHQRISIVEVMGRYCGDLTLAAAIAGGCEFIVVPEVEFNREDLVAEIKAGIAKGKKHAIVAITEHMCDVDELAHFIEKETGRETRATVLGHIQRGGSPVPYDRILASRMGAYAIDLLLEGHGGRCVGIQNEQLVHHDIIDAIENMKRPFKSDWMECAKKLY</sequence>